<sequence>MAKPGKKIEAARKQVEVRPYALQDAVPLLQKVKFAKFDETVDLTLRLGVDPKHADQMVRGTVVLPHGLGKTKIVLVIASGEKQREAEAAGADFVGGEDMVEKIAKEGWTDYDAVISTPDMMRSVGKLGKVLGPRGLMPNPKTGTVTTDVASAVREVKAGKVEFRTDKTGLVHVPVGKISFPPDKLVDNATTLITSVVKAKPSAAKGKYIKGCYLSSTMGPGISIDTTAIEAASKS</sequence>
<comment type="function">
    <text evidence="1">Binds directly to 23S rRNA. The L1 stalk is quite mobile in the ribosome, and is involved in E site tRNA release.</text>
</comment>
<comment type="function">
    <text evidence="1">Protein L1 is also a translational repressor protein, it controls the translation of the L11 operon by binding to its mRNA.</text>
</comment>
<comment type="subunit">
    <text evidence="1">Part of the 50S ribosomal subunit.</text>
</comment>
<comment type="similarity">
    <text evidence="1">Belongs to the universal ribosomal protein uL1 family.</text>
</comment>
<dbReference type="EMBL" id="CP000360">
    <property type="protein sequence ID" value="ABF43679.1"/>
    <property type="molecule type" value="Genomic_DNA"/>
</dbReference>
<dbReference type="RefSeq" id="WP_011525476.1">
    <property type="nucleotide sequence ID" value="NC_008009.1"/>
</dbReference>
<dbReference type="SMR" id="Q1IHH1"/>
<dbReference type="STRING" id="204669.Acid345_4679"/>
<dbReference type="EnsemblBacteria" id="ABF43679">
    <property type="protein sequence ID" value="ABF43679"/>
    <property type="gene ID" value="Acid345_4679"/>
</dbReference>
<dbReference type="KEGG" id="aba:Acid345_4679"/>
<dbReference type="eggNOG" id="COG0081">
    <property type="taxonomic scope" value="Bacteria"/>
</dbReference>
<dbReference type="HOGENOM" id="CLU_062853_0_0_0"/>
<dbReference type="OrthoDB" id="9803740at2"/>
<dbReference type="Proteomes" id="UP000002432">
    <property type="component" value="Chromosome"/>
</dbReference>
<dbReference type="GO" id="GO:0015934">
    <property type="term" value="C:large ribosomal subunit"/>
    <property type="evidence" value="ECO:0007669"/>
    <property type="project" value="InterPro"/>
</dbReference>
<dbReference type="GO" id="GO:0019843">
    <property type="term" value="F:rRNA binding"/>
    <property type="evidence" value="ECO:0007669"/>
    <property type="project" value="UniProtKB-UniRule"/>
</dbReference>
<dbReference type="GO" id="GO:0003735">
    <property type="term" value="F:structural constituent of ribosome"/>
    <property type="evidence" value="ECO:0007669"/>
    <property type="project" value="InterPro"/>
</dbReference>
<dbReference type="GO" id="GO:0000049">
    <property type="term" value="F:tRNA binding"/>
    <property type="evidence" value="ECO:0007669"/>
    <property type="project" value="UniProtKB-KW"/>
</dbReference>
<dbReference type="GO" id="GO:0006417">
    <property type="term" value="P:regulation of translation"/>
    <property type="evidence" value="ECO:0007669"/>
    <property type="project" value="UniProtKB-KW"/>
</dbReference>
<dbReference type="GO" id="GO:0006412">
    <property type="term" value="P:translation"/>
    <property type="evidence" value="ECO:0007669"/>
    <property type="project" value="UniProtKB-UniRule"/>
</dbReference>
<dbReference type="CDD" id="cd00403">
    <property type="entry name" value="Ribosomal_L1"/>
    <property type="match status" value="1"/>
</dbReference>
<dbReference type="FunFam" id="3.40.50.790:FF:000001">
    <property type="entry name" value="50S ribosomal protein L1"/>
    <property type="match status" value="1"/>
</dbReference>
<dbReference type="Gene3D" id="3.30.190.20">
    <property type="match status" value="1"/>
</dbReference>
<dbReference type="Gene3D" id="3.40.50.790">
    <property type="match status" value="1"/>
</dbReference>
<dbReference type="HAMAP" id="MF_01318_B">
    <property type="entry name" value="Ribosomal_uL1_B"/>
    <property type="match status" value="1"/>
</dbReference>
<dbReference type="InterPro" id="IPR005878">
    <property type="entry name" value="Ribosom_uL1_bac-type"/>
</dbReference>
<dbReference type="InterPro" id="IPR002143">
    <property type="entry name" value="Ribosomal_uL1"/>
</dbReference>
<dbReference type="InterPro" id="IPR023674">
    <property type="entry name" value="Ribosomal_uL1-like"/>
</dbReference>
<dbReference type="InterPro" id="IPR028364">
    <property type="entry name" value="Ribosomal_uL1/biogenesis"/>
</dbReference>
<dbReference type="InterPro" id="IPR016095">
    <property type="entry name" value="Ribosomal_uL1_3-a/b-sand"/>
</dbReference>
<dbReference type="InterPro" id="IPR023673">
    <property type="entry name" value="Ribosomal_uL1_CS"/>
</dbReference>
<dbReference type="NCBIfam" id="TIGR01169">
    <property type="entry name" value="rplA_bact"/>
    <property type="match status" value="1"/>
</dbReference>
<dbReference type="PANTHER" id="PTHR36427">
    <property type="entry name" value="54S RIBOSOMAL PROTEIN L1, MITOCHONDRIAL"/>
    <property type="match status" value="1"/>
</dbReference>
<dbReference type="PANTHER" id="PTHR36427:SF3">
    <property type="entry name" value="LARGE RIBOSOMAL SUBUNIT PROTEIN UL1M"/>
    <property type="match status" value="1"/>
</dbReference>
<dbReference type="Pfam" id="PF00687">
    <property type="entry name" value="Ribosomal_L1"/>
    <property type="match status" value="1"/>
</dbReference>
<dbReference type="PIRSF" id="PIRSF002155">
    <property type="entry name" value="Ribosomal_L1"/>
    <property type="match status" value="1"/>
</dbReference>
<dbReference type="SUPFAM" id="SSF56808">
    <property type="entry name" value="Ribosomal protein L1"/>
    <property type="match status" value="1"/>
</dbReference>
<dbReference type="PROSITE" id="PS01199">
    <property type="entry name" value="RIBOSOMAL_L1"/>
    <property type="match status" value="1"/>
</dbReference>
<evidence type="ECO:0000255" key="1">
    <source>
        <dbReference type="HAMAP-Rule" id="MF_01318"/>
    </source>
</evidence>
<evidence type="ECO:0000305" key="2"/>
<proteinExistence type="inferred from homology"/>
<accession>Q1IHH1</accession>
<feature type="chain" id="PRO_0000307948" description="Large ribosomal subunit protein uL1">
    <location>
        <begin position="1"/>
        <end position="235"/>
    </location>
</feature>
<keyword id="KW-1185">Reference proteome</keyword>
<keyword id="KW-0678">Repressor</keyword>
<keyword id="KW-0687">Ribonucleoprotein</keyword>
<keyword id="KW-0689">Ribosomal protein</keyword>
<keyword id="KW-0694">RNA-binding</keyword>
<keyword id="KW-0699">rRNA-binding</keyword>
<keyword id="KW-0810">Translation regulation</keyword>
<keyword id="KW-0820">tRNA-binding</keyword>
<organism>
    <name type="scientific">Koribacter versatilis (strain Ellin345)</name>
    <dbReference type="NCBI Taxonomy" id="204669"/>
    <lineage>
        <taxon>Bacteria</taxon>
        <taxon>Pseudomonadati</taxon>
        <taxon>Acidobacteriota</taxon>
        <taxon>Terriglobia</taxon>
        <taxon>Terriglobales</taxon>
        <taxon>Candidatus Korobacteraceae</taxon>
        <taxon>Candidatus Korobacter</taxon>
    </lineage>
</organism>
<name>RL1_KORVE</name>
<gene>
    <name evidence="1" type="primary">rplA</name>
    <name type="ordered locus">Acid345_4679</name>
</gene>
<reference key="1">
    <citation type="journal article" date="2009" name="Appl. Environ. Microbiol.">
        <title>Three genomes from the phylum Acidobacteria provide insight into the lifestyles of these microorganisms in soils.</title>
        <authorList>
            <person name="Ward N.L."/>
            <person name="Challacombe J.F."/>
            <person name="Janssen P.H."/>
            <person name="Henrissat B."/>
            <person name="Coutinho P.M."/>
            <person name="Wu M."/>
            <person name="Xie G."/>
            <person name="Haft D.H."/>
            <person name="Sait M."/>
            <person name="Badger J."/>
            <person name="Barabote R.D."/>
            <person name="Bradley B."/>
            <person name="Brettin T.S."/>
            <person name="Brinkac L.M."/>
            <person name="Bruce D."/>
            <person name="Creasy T."/>
            <person name="Daugherty S.C."/>
            <person name="Davidsen T.M."/>
            <person name="DeBoy R.T."/>
            <person name="Detter J.C."/>
            <person name="Dodson R.J."/>
            <person name="Durkin A.S."/>
            <person name="Ganapathy A."/>
            <person name="Gwinn-Giglio M."/>
            <person name="Han C.S."/>
            <person name="Khouri H."/>
            <person name="Kiss H."/>
            <person name="Kothari S.P."/>
            <person name="Madupu R."/>
            <person name="Nelson K.E."/>
            <person name="Nelson W.C."/>
            <person name="Paulsen I."/>
            <person name="Penn K."/>
            <person name="Ren Q."/>
            <person name="Rosovitz M.J."/>
            <person name="Selengut J.D."/>
            <person name="Shrivastava S."/>
            <person name="Sullivan S.A."/>
            <person name="Tapia R."/>
            <person name="Thompson L.S."/>
            <person name="Watkins K.L."/>
            <person name="Yang Q."/>
            <person name="Yu C."/>
            <person name="Zafar N."/>
            <person name="Zhou L."/>
            <person name="Kuske C.R."/>
        </authorList>
    </citation>
    <scope>NUCLEOTIDE SEQUENCE [LARGE SCALE GENOMIC DNA]</scope>
    <source>
        <strain>Ellin345</strain>
    </source>
</reference>
<protein>
    <recommendedName>
        <fullName evidence="1">Large ribosomal subunit protein uL1</fullName>
    </recommendedName>
    <alternativeName>
        <fullName evidence="2">50S ribosomal protein L1</fullName>
    </alternativeName>
</protein>